<proteinExistence type="evidence at transcript level"/>
<accession>Q5Z676</accession>
<accession>B7EHU9</accession>
<evidence type="ECO:0000250" key="1"/>
<evidence type="ECO:0000255" key="2">
    <source>
        <dbReference type="PROSITE-ProRule" id="PRU00448"/>
    </source>
</evidence>
<evidence type="ECO:0000305" key="3"/>
<sequence>MATPAGGRPSQPQPQAQQLSVDFEALSYISSLVEAFQAFDSDNDGLVTAPELRGLLASLGLDKPEHEVRDMLARADADRDGKLSVEELLDVMNAGQLGLGALGALLQSAVPALESAAGPDGVLGADELARLLSVMGTASVEDCMEIIACMDGDGDGAISVEEFRLMAQLL</sequence>
<keyword id="KW-0106">Calcium</keyword>
<keyword id="KW-0479">Metal-binding</keyword>
<keyword id="KW-1185">Reference proteome</keyword>
<keyword id="KW-0677">Repeat</keyword>
<dbReference type="EMBL" id="AP005457">
    <property type="protein sequence ID" value="BAD54515.1"/>
    <property type="molecule type" value="Genomic_DNA"/>
</dbReference>
<dbReference type="EMBL" id="AP008212">
    <property type="protein sequence ID" value="BAF20337.1"/>
    <property type="molecule type" value="Genomic_DNA"/>
</dbReference>
<dbReference type="EMBL" id="AP014962">
    <property type="protein sequence ID" value="BAS99239.1"/>
    <property type="molecule type" value="Genomic_DNA"/>
</dbReference>
<dbReference type="EMBL" id="CM000143">
    <property type="protein sequence ID" value="EAZ38102.1"/>
    <property type="molecule type" value="Genomic_DNA"/>
</dbReference>
<dbReference type="EMBL" id="AK070430">
    <property type="protein sequence ID" value="BAG91946.1"/>
    <property type="molecule type" value="mRNA"/>
</dbReference>
<dbReference type="RefSeq" id="XP_015642984.1">
    <property type="nucleotide sequence ID" value="XM_015787498.1"/>
</dbReference>
<dbReference type="SMR" id="Q5Z676"/>
<dbReference type="STRING" id="39947.Q5Z676"/>
<dbReference type="PaxDb" id="39947-Q5Z676"/>
<dbReference type="EnsemblPlants" id="Os06t0691600-01">
    <property type="protein sequence ID" value="Os06t0691600-01"/>
    <property type="gene ID" value="Os06g0691600"/>
</dbReference>
<dbReference type="Gramene" id="Os06t0691600-01">
    <property type="protein sequence ID" value="Os06t0691600-01"/>
    <property type="gene ID" value="Os06g0691600"/>
</dbReference>
<dbReference type="KEGG" id="dosa:Os06g0691600"/>
<dbReference type="eggNOG" id="KOG0027">
    <property type="taxonomic scope" value="Eukaryota"/>
</dbReference>
<dbReference type="HOGENOM" id="CLU_061288_20_7_1"/>
<dbReference type="InParanoid" id="Q5Z676"/>
<dbReference type="OMA" id="HEFLEMN"/>
<dbReference type="OrthoDB" id="26525at2759"/>
<dbReference type="Proteomes" id="UP000000763">
    <property type="component" value="Chromosome 6"/>
</dbReference>
<dbReference type="Proteomes" id="UP000007752">
    <property type="component" value="Chromosome 6"/>
</dbReference>
<dbReference type="Proteomes" id="UP000059680">
    <property type="component" value="Chromosome 6"/>
</dbReference>
<dbReference type="GO" id="GO:0005509">
    <property type="term" value="F:calcium ion binding"/>
    <property type="evidence" value="ECO:0007669"/>
    <property type="project" value="InterPro"/>
</dbReference>
<dbReference type="CDD" id="cd00051">
    <property type="entry name" value="EFh"/>
    <property type="match status" value="1"/>
</dbReference>
<dbReference type="FunFam" id="1.10.238.10:FF:000178">
    <property type="entry name" value="Calmodulin-2 A"/>
    <property type="match status" value="1"/>
</dbReference>
<dbReference type="Gene3D" id="1.10.238.10">
    <property type="entry name" value="EF-hand"/>
    <property type="match status" value="2"/>
</dbReference>
<dbReference type="InterPro" id="IPR011992">
    <property type="entry name" value="EF-hand-dom_pair"/>
</dbReference>
<dbReference type="InterPro" id="IPR018247">
    <property type="entry name" value="EF_Hand_1_Ca_BS"/>
</dbReference>
<dbReference type="InterPro" id="IPR002048">
    <property type="entry name" value="EF_hand_dom"/>
</dbReference>
<dbReference type="InterPro" id="IPR039647">
    <property type="entry name" value="EF_hand_pair_protein_CML-like"/>
</dbReference>
<dbReference type="PANTHER" id="PTHR10891">
    <property type="entry name" value="EF-HAND CALCIUM-BINDING DOMAIN CONTAINING PROTEIN"/>
    <property type="match status" value="1"/>
</dbReference>
<dbReference type="Pfam" id="PF13499">
    <property type="entry name" value="EF-hand_7"/>
    <property type="match status" value="1"/>
</dbReference>
<dbReference type="Pfam" id="PF13833">
    <property type="entry name" value="EF-hand_8"/>
    <property type="match status" value="1"/>
</dbReference>
<dbReference type="SMART" id="SM00054">
    <property type="entry name" value="EFh"/>
    <property type="match status" value="3"/>
</dbReference>
<dbReference type="SUPFAM" id="SSF47473">
    <property type="entry name" value="EF-hand"/>
    <property type="match status" value="1"/>
</dbReference>
<dbReference type="PROSITE" id="PS00018">
    <property type="entry name" value="EF_HAND_1"/>
    <property type="match status" value="3"/>
</dbReference>
<dbReference type="PROSITE" id="PS50222">
    <property type="entry name" value="EF_HAND_2"/>
    <property type="match status" value="3"/>
</dbReference>
<comment type="function">
    <text evidence="1">Potential calcium sensor.</text>
</comment>
<comment type="caution">
    <text evidence="3">Although assigned as a calmodulin family member by PubMed:17263873, it only contains EF-hand domains.</text>
</comment>
<protein>
    <recommendedName>
        <fullName>Probable calcium-binding protein CML29</fullName>
    </recommendedName>
    <alternativeName>
        <fullName>Calmodulin-like protein 29</fullName>
    </alternativeName>
</protein>
<name>CML29_ORYSJ</name>
<organism>
    <name type="scientific">Oryza sativa subsp. japonica</name>
    <name type="common">Rice</name>
    <dbReference type="NCBI Taxonomy" id="39947"/>
    <lineage>
        <taxon>Eukaryota</taxon>
        <taxon>Viridiplantae</taxon>
        <taxon>Streptophyta</taxon>
        <taxon>Embryophyta</taxon>
        <taxon>Tracheophyta</taxon>
        <taxon>Spermatophyta</taxon>
        <taxon>Magnoliopsida</taxon>
        <taxon>Liliopsida</taxon>
        <taxon>Poales</taxon>
        <taxon>Poaceae</taxon>
        <taxon>BOP clade</taxon>
        <taxon>Oryzoideae</taxon>
        <taxon>Oryzeae</taxon>
        <taxon>Oryzinae</taxon>
        <taxon>Oryza</taxon>
        <taxon>Oryza sativa</taxon>
    </lineage>
</organism>
<reference key="1">
    <citation type="journal article" date="2005" name="Nature">
        <title>The map-based sequence of the rice genome.</title>
        <authorList>
            <consortium name="International rice genome sequencing project (IRGSP)"/>
        </authorList>
    </citation>
    <scope>NUCLEOTIDE SEQUENCE [LARGE SCALE GENOMIC DNA]</scope>
    <source>
        <strain>cv. Nipponbare</strain>
    </source>
</reference>
<reference key="2">
    <citation type="journal article" date="2008" name="Nucleic Acids Res.">
        <title>The rice annotation project database (RAP-DB): 2008 update.</title>
        <authorList>
            <consortium name="The rice annotation project (RAP)"/>
        </authorList>
    </citation>
    <scope>GENOME REANNOTATION</scope>
    <source>
        <strain>cv. Nipponbare</strain>
    </source>
</reference>
<reference key="3">
    <citation type="journal article" date="2013" name="Rice">
        <title>Improvement of the Oryza sativa Nipponbare reference genome using next generation sequence and optical map data.</title>
        <authorList>
            <person name="Kawahara Y."/>
            <person name="de la Bastide M."/>
            <person name="Hamilton J.P."/>
            <person name="Kanamori H."/>
            <person name="McCombie W.R."/>
            <person name="Ouyang S."/>
            <person name="Schwartz D.C."/>
            <person name="Tanaka T."/>
            <person name="Wu J."/>
            <person name="Zhou S."/>
            <person name="Childs K.L."/>
            <person name="Davidson R.M."/>
            <person name="Lin H."/>
            <person name="Quesada-Ocampo L."/>
            <person name="Vaillancourt B."/>
            <person name="Sakai H."/>
            <person name="Lee S.S."/>
            <person name="Kim J."/>
            <person name="Numa H."/>
            <person name="Itoh T."/>
            <person name="Buell C.R."/>
            <person name="Matsumoto T."/>
        </authorList>
    </citation>
    <scope>GENOME REANNOTATION</scope>
    <source>
        <strain>cv. Nipponbare</strain>
    </source>
</reference>
<reference key="4">
    <citation type="journal article" date="2005" name="PLoS Biol.">
        <title>The genomes of Oryza sativa: a history of duplications.</title>
        <authorList>
            <person name="Yu J."/>
            <person name="Wang J."/>
            <person name="Lin W."/>
            <person name="Li S."/>
            <person name="Li H."/>
            <person name="Zhou J."/>
            <person name="Ni P."/>
            <person name="Dong W."/>
            <person name="Hu S."/>
            <person name="Zeng C."/>
            <person name="Zhang J."/>
            <person name="Zhang Y."/>
            <person name="Li R."/>
            <person name="Xu Z."/>
            <person name="Li S."/>
            <person name="Li X."/>
            <person name="Zheng H."/>
            <person name="Cong L."/>
            <person name="Lin L."/>
            <person name="Yin J."/>
            <person name="Geng J."/>
            <person name="Li G."/>
            <person name="Shi J."/>
            <person name="Liu J."/>
            <person name="Lv H."/>
            <person name="Li J."/>
            <person name="Wang J."/>
            <person name="Deng Y."/>
            <person name="Ran L."/>
            <person name="Shi X."/>
            <person name="Wang X."/>
            <person name="Wu Q."/>
            <person name="Li C."/>
            <person name="Ren X."/>
            <person name="Wang J."/>
            <person name="Wang X."/>
            <person name="Li D."/>
            <person name="Liu D."/>
            <person name="Zhang X."/>
            <person name="Ji Z."/>
            <person name="Zhao W."/>
            <person name="Sun Y."/>
            <person name="Zhang Z."/>
            <person name="Bao J."/>
            <person name="Han Y."/>
            <person name="Dong L."/>
            <person name="Ji J."/>
            <person name="Chen P."/>
            <person name="Wu S."/>
            <person name="Liu J."/>
            <person name="Xiao Y."/>
            <person name="Bu D."/>
            <person name="Tan J."/>
            <person name="Yang L."/>
            <person name="Ye C."/>
            <person name="Zhang J."/>
            <person name="Xu J."/>
            <person name="Zhou Y."/>
            <person name="Yu Y."/>
            <person name="Zhang B."/>
            <person name="Zhuang S."/>
            <person name="Wei H."/>
            <person name="Liu B."/>
            <person name="Lei M."/>
            <person name="Yu H."/>
            <person name="Li Y."/>
            <person name="Xu H."/>
            <person name="Wei S."/>
            <person name="He X."/>
            <person name="Fang L."/>
            <person name="Zhang Z."/>
            <person name="Zhang Y."/>
            <person name="Huang X."/>
            <person name="Su Z."/>
            <person name="Tong W."/>
            <person name="Li J."/>
            <person name="Tong Z."/>
            <person name="Li S."/>
            <person name="Ye J."/>
            <person name="Wang L."/>
            <person name="Fang L."/>
            <person name="Lei T."/>
            <person name="Chen C.-S."/>
            <person name="Chen H.-C."/>
            <person name="Xu Z."/>
            <person name="Li H."/>
            <person name="Huang H."/>
            <person name="Zhang F."/>
            <person name="Xu H."/>
            <person name="Li N."/>
            <person name="Zhao C."/>
            <person name="Li S."/>
            <person name="Dong L."/>
            <person name="Huang Y."/>
            <person name="Li L."/>
            <person name="Xi Y."/>
            <person name="Qi Q."/>
            <person name="Li W."/>
            <person name="Zhang B."/>
            <person name="Hu W."/>
            <person name="Zhang Y."/>
            <person name="Tian X."/>
            <person name="Jiao Y."/>
            <person name="Liang X."/>
            <person name="Jin J."/>
            <person name="Gao L."/>
            <person name="Zheng W."/>
            <person name="Hao B."/>
            <person name="Liu S.-M."/>
            <person name="Wang W."/>
            <person name="Yuan L."/>
            <person name="Cao M."/>
            <person name="McDermott J."/>
            <person name="Samudrala R."/>
            <person name="Wang J."/>
            <person name="Wong G.K.-S."/>
            <person name="Yang H."/>
        </authorList>
    </citation>
    <scope>NUCLEOTIDE SEQUENCE [LARGE SCALE GENOMIC DNA]</scope>
    <source>
        <strain>cv. Nipponbare</strain>
    </source>
</reference>
<reference key="5">
    <citation type="journal article" date="2003" name="Science">
        <title>Collection, mapping, and annotation of over 28,000 cDNA clones from japonica rice.</title>
        <authorList>
            <consortium name="The rice full-length cDNA consortium"/>
        </authorList>
    </citation>
    <scope>NUCLEOTIDE SEQUENCE [LARGE SCALE MRNA]</scope>
    <source>
        <strain>cv. Nipponbare</strain>
    </source>
</reference>
<reference key="6">
    <citation type="journal article" date="2007" name="BMC Plant Biol.">
        <title>Genome-wide identification and analyses of the rice calmodulin and related potential calcium sensor proteins.</title>
        <authorList>
            <person name="Boonburapong B."/>
            <person name="Buaboocha T."/>
        </authorList>
    </citation>
    <scope>GENE FAMILY</scope>
    <scope>NOMENCLATURE</scope>
</reference>
<feature type="chain" id="PRO_0000338443" description="Probable calcium-binding protein CML29">
    <location>
        <begin position="1"/>
        <end position="170"/>
    </location>
</feature>
<feature type="domain" description="EF-hand 1" evidence="2">
    <location>
        <begin position="27"/>
        <end position="62"/>
    </location>
</feature>
<feature type="domain" description="EF-hand 2" evidence="2">
    <location>
        <begin position="63"/>
        <end position="98"/>
    </location>
</feature>
<feature type="domain" description="EF-hand 3" evidence="2">
    <location>
        <begin position="138"/>
        <end position="170"/>
    </location>
</feature>
<feature type="binding site" evidence="2">
    <location>
        <position position="40"/>
    </location>
    <ligand>
        <name>Ca(2+)</name>
        <dbReference type="ChEBI" id="CHEBI:29108"/>
        <label>1</label>
    </ligand>
</feature>
<feature type="binding site" evidence="2">
    <location>
        <position position="42"/>
    </location>
    <ligand>
        <name>Ca(2+)</name>
        <dbReference type="ChEBI" id="CHEBI:29108"/>
        <label>1</label>
    </ligand>
</feature>
<feature type="binding site" evidence="2">
    <location>
        <position position="44"/>
    </location>
    <ligand>
        <name>Ca(2+)</name>
        <dbReference type="ChEBI" id="CHEBI:29108"/>
        <label>1</label>
    </ligand>
</feature>
<feature type="binding site" evidence="2">
    <location>
        <position position="51"/>
    </location>
    <ligand>
        <name>Ca(2+)</name>
        <dbReference type="ChEBI" id="CHEBI:29108"/>
        <label>1</label>
    </ligand>
</feature>
<feature type="binding site" evidence="2">
    <location>
        <position position="76"/>
    </location>
    <ligand>
        <name>Ca(2+)</name>
        <dbReference type="ChEBI" id="CHEBI:29108"/>
        <label>2</label>
    </ligand>
</feature>
<feature type="binding site" evidence="2">
    <location>
        <position position="78"/>
    </location>
    <ligand>
        <name>Ca(2+)</name>
        <dbReference type="ChEBI" id="CHEBI:29108"/>
        <label>2</label>
    </ligand>
</feature>
<feature type="binding site" evidence="2">
    <location>
        <position position="80"/>
    </location>
    <ligand>
        <name>Ca(2+)</name>
        <dbReference type="ChEBI" id="CHEBI:29108"/>
        <label>2</label>
    </ligand>
</feature>
<feature type="binding site" evidence="2">
    <location>
        <position position="82"/>
    </location>
    <ligand>
        <name>Ca(2+)</name>
        <dbReference type="ChEBI" id="CHEBI:29108"/>
        <label>2</label>
    </ligand>
</feature>
<feature type="binding site" evidence="2">
    <location>
        <position position="87"/>
    </location>
    <ligand>
        <name>Ca(2+)</name>
        <dbReference type="ChEBI" id="CHEBI:29108"/>
        <label>2</label>
    </ligand>
</feature>
<feature type="binding site" evidence="2">
    <location>
        <position position="151"/>
    </location>
    <ligand>
        <name>Ca(2+)</name>
        <dbReference type="ChEBI" id="CHEBI:29108"/>
        <label>3</label>
    </ligand>
</feature>
<feature type="binding site" evidence="2">
    <location>
        <position position="153"/>
    </location>
    <ligand>
        <name>Ca(2+)</name>
        <dbReference type="ChEBI" id="CHEBI:29108"/>
        <label>3</label>
    </ligand>
</feature>
<feature type="binding site" evidence="2">
    <location>
        <position position="155"/>
    </location>
    <ligand>
        <name>Ca(2+)</name>
        <dbReference type="ChEBI" id="CHEBI:29108"/>
        <label>3</label>
    </ligand>
</feature>
<feature type="binding site" evidence="2">
    <location>
        <position position="162"/>
    </location>
    <ligand>
        <name>Ca(2+)</name>
        <dbReference type="ChEBI" id="CHEBI:29108"/>
        <label>3</label>
    </ligand>
</feature>
<gene>
    <name type="primary">CML29</name>
    <name type="ordered locus">Os06g0691600</name>
    <name type="ordered locus">LOC_Os06g47640</name>
    <name type="ORF">OsJ_021585</name>
    <name type="ORF">P0532H03.18</name>
</gene>